<name>ATP5H_DROME</name>
<organism>
    <name type="scientific">Drosophila melanogaster</name>
    <name type="common">Fruit fly</name>
    <dbReference type="NCBI Taxonomy" id="7227"/>
    <lineage>
        <taxon>Eukaryota</taxon>
        <taxon>Metazoa</taxon>
        <taxon>Ecdysozoa</taxon>
        <taxon>Arthropoda</taxon>
        <taxon>Hexapoda</taxon>
        <taxon>Insecta</taxon>
        <taxon>Pterygota</taxon>
        <taxon>Neoptera</taxon>
        <taxon>Endopterygota</taxon>
        <taxon>Diptera</taxon>
        <taxon>Brachycera</taxon>
        <taxon>Muscomorpha</taxon>
        <taxon>Ephydroidea</taxon>
        <taxon>Drosophilidae</taxon>
        <taxon>Drosophila</taxon>
        <taxon>Sophophora</taxon>
    </lineage>
</organism>
<keyword id="KW-0138">CF(0)</keyword>
<keyword id="KW-0375">Hydrogen ion transport</keyword>
<keyword id="KW-0406">Ion transport</keyword>
<keyword id="KW-0472">Membrane</keyword>
<keyword id="KW-0496">Mitochondrion</keyword>
<keyword id="KW-0999">Mitochondrion inner membrane</keyword>
<keyword id="KW-1185">Reference proteome</keyword>
<keyword id="KW-0813">Transport</keyword>
<gene>
    <name evidence="3" type="primary">ATPsynD</name>
    <name evidence="3" type="synonym">ATPsyn-d</name>
    <name evidence="3" type="ORF">CG6030</name>
</gene>
<feature type="chain" id="PRO_0000071676" description="ATP synthase subunit d, mitochondrial">
    <location>
        <begin position="1"/>
        <end position="178"/>
    </location>
</feature>
<feature type="region of interest" description="Disordered" evidence="1">
    <location>
        <begin position="149"/>
        <end position="178"/>
    </location>
</feature>
<feature type="compositionally biased region" description="Basic and acidic residues" evidence="1">
    <location>
        <begin position="165"/>
        <end position="178"/>
    </location>
</feature>
<feature type="sequence conflict" description="In Ref. 1; CAA67981." evidence="2" ref="1">
    <original>S</original>
    <variation>N</variation>
    <location>
        <position position="99"/>
    </location>
</feature>
<comment type="function">
    <text>Mitochondrial membrane ATP synthase (F(1)F(0) ATP synthase or Complex V) produces ATP from ADP in the presence of a proton gradient across the membrane which is generated by electron transport complexes of the respiratory chain. F-type ATPases consist of two structural domains, F(1) - containing the extramembraneous catalytic core, and F(0) - containing the membrane proton channel, linked together by a central stalk and a peripheral stalk. During catalysis, ATP synthesis in the catalytic domain of F(1) is coupled via a rotary mechanism of the central stalk subunits to proton translocation. Part of the complex F(0) domain and the peripheric stalk, which acts as a stator to hold the catalytic alpha(3)beta(3) subcomplex and subunit a/ATP6 static relative to the rotary elements.</text>
</comment>
<comment type="subunit">
    <text>F-type ATPases have 2 components, CF(1) - the catalytic core - and CF(0) - the membrane proton channel. CF(0) seems to have nine subunits: a, b, c, d, e, f, g, F6 and 8 (or A6L).</text>
</comment>
<comment type="subcellular location">
    <subcellularLocation>
        <location>Mitochondrion</location>
    </subcellularLocation>
    <subcellularLocation>
        <location>Mitochondrion inner membrane</location>
    </subcellularLocation>
</comment>
<comment type="similarity">
    <text evidence="2">Belongs to the ATPase d subunit family.</text>
</comment>
<comment type="sequence caution" evidence="2">
    <conflict type="erroneous initiation">
        <sequence resource="EMBL-CDS" id="AAL49373"/>
    </conflict>
</comment>
<accession>Q24251</accession>
<accession>A4V344</accession>
<accession>Q2XYL2</accession>
<accession>Q8MTU3</accession>
<accession>Q9VE03</accession>
<sequence>MAARRIAQSSINWSALAERVPANQKSSFGAFKTKSDIYVRAVLANPECPPQIDWANYKKLVPVAGLVDSFQKQYEALKVPYPQDKVSSQVDAEIKASQSEIDAYKKASEQRIQNYQKEIAHLKSLLPYDQMTMEDYRDAFPDSALDPLNKPTFWPHTPEEQVGYKSKEQLEAEAQGHH</sequence>
<evidence type="ECO:0000256" key="1">
    <source>
        <dbReference type="SAM" id="MobiDB-lite"/>
    </source>
</evidence>
<evidence type="ECO:0000305" key="2"/>
<evidence type="ECO:0000312" key="3">
    <source>
        <dbReference type="FlyBase" id="FBgn0016120"/>
    </source>
</evidence>
<dbReference type="EMBL" id="X99667">
    <property type="protein sequence ID" value="CAA67981.1"/>
    <property type="molecule type" value="mRNA"/>
</dbReference>
<dbReference type="EMBL" id="AE014297">
    <property type="protein sequence ID" value="AAF55633.1"/>
    <property type="molecule type" value="Genomic_DNA"/>
</dbReference>
<dbReference type="EMBL" id="AE014297">
    <property type="protein sequence ID" value="AAN13796.1"/>
    <property type="molecule type" value="Genomic_DNA"/>
</dbReference>
<dbReference type="EMBL" id="AY071751">
    <property type="protein sequence ID" value="AAL49373.2"/>
    <property type="status" value="ALT_INIT"/>
    <property type="molecule type" value="mRNA"/>
</dbReference>
<dbReference type="EMBL" id="BT088850">
    <property type="protein sequence ID" value="ACS68167.1"/>
    <property type="molecule type" value="mRNA"/>
</dbReference>
<dbReference type="EMBL" id="DQ138650">
    <property type="protein sequence ID" value="ABA86256.1"/>
    <property type="molecule type" value="Genomic_DNA"/>
</dbReference>
<dbReference type="RefSeq" id="NP_001287401.1">
    <property type="nucleotide sequence ID" value="NM_001300472.1"/>
</dbReference>
<dbReference type="RefSeq" id="NP_524402.1">
    <property type="nucleotide sequence ID" value="NM_079678.6"/>
</dbReference>
<dbReference type="RefSeq" id="NP_732400.1">
    <property type="nucleotide sequence ID" value="NM_169847.3"/>
</dbReference>
<dbReference type="SMR" id="Q24251"/>
<dbReference type="BioGRID" id="67289">
    <property type="interactions" value="33"/>
</dbReference>
<dbReference type="ComplexPortal" id="CPX-8618">
    <property type="entry name" value="Mitochondrial proton-transporting ATP synthase complex"/>
</dbReference>
<dbReference type="DIP" id="DIP-18345N"/>
<dbReference type="FunCoup" id="Q24251">
    <property type="interactions" value="1618"/>
</dbReference>
<dbReference type="IntAct" id="Q24251">
    <property type="interactions" value="93"/>
</dbReference>
<dbReference type="STRING" id="7227.FBpp0311983"/>
<dbReference type="PaxDb" id="7227-FBpp0083141"/>
<dbReference type="EnsemblMetazoa" id="FBtr0083727">
    <property type="protein sequence ID" value="FBpp0083141"/>
    <property type="gene ID" value="FBgn0016120"/>
</dbReference>
<dbReference type="EnsemblMetazoa" id="FBtr0083728">
    <property type="protein sequence ID" value="FBpp0083142"/>
    <property type="gene ID" value="FBgn0016120"/>
</dbReference>
<dbReference type="EnsemblMetazoa" id="FBtr0346155">
    <property type="protein sequence ID" value="FBpp0311983"/>
    <property type="gene ID" value="FBgn0016120"/>
</dbReference>
<dbReference type="GeneID" id="42291"/>
<dbReference type="KEGG" id="dme:Dmel_CG6030"/>
<dbReference type="UCSC" id="CG6030-RB">
    <property type="organism name" value="d. melanogaster"/>
</dbReference>
<dbReference type="AGR" id="FB:FBgn0016120"/>
<dbReference type="CTD" id="42291"/>
<dbReference type="FlyBase" id="FBgn0016120">
    <property type="gene designation" value="ATPsynD"/>
</dbReference>
<dbReference type="VEuPathDB" id="VectorBase:FBgn0016120"/>
<dbReference type="eggNOG" id="KOG3366">
    <property type="taxonomic scope" value="Eukaryota"/>
</dbReference>
<dbReference type="GeneTree" id="ENSGT00390000003582"/>
<dbReference type="HOGENOM" id="CLU_130600_0_0_1"/>
<dbReference type="InParanoid" id="Q24251"/>
<dbReference type="OMA" id="VSKGRWA"/>
<dbReference type="OrthoDB" id="35799at2759"/>
<dbReference type="PhylomeDB" id="Q24251"/>
<dbReference type="Reactome" id="R-DME-163210">
    <property type="pathway name" value="Formation of ATP by chemiosmotic coupling"/>
</dbReference>
<dbReference type="Reactome" id="R-DME-8949613">
    <property type="pathway name" value="Cristae formation"/>
</dbReference>
<dbReference type="Reactome" id="R-DME-9837999">
    <property type="pathway name" value="Mitochondrial protein degradation"/>
</dbReference>
<dbReference type="BioGRID-ORCS" id="42291">
    <property type="hits" value="1 hit in 1 CRISPR screen"/>
</dbReference>
<dbReference type="GenomeRNAi" id="42291"/>
<dbReference type="PRO" id="PR:Q24251"/>
<dbReference type="Proteomes" id="UP000000803">
    <property type="component" value="Chromosome 3R"/>
</dbReference>
<dbReference type="Bgee" id="FBgn0016120">
    <property type="expression patterns" value="Expressed in dorsal cluster neuron (Drosophila) in brain and 292 other cell types or tissues"/>
</dbReference>
<dbReference type="ExpressionAtlas" id="Q24251">
    <property type="expression patterns" value="baseline and differential"/>
</dbReference>
<dbReference type="GO" id="GO:0005743">
    <property type="term" value="C:mitochondrial inner membrane"/>
    <property type="evidence" value="ECO:0000250"/>
    <property type="project" value="FlyBase"/>
</dbReference>
<dbReference type="GO" id="GO:0005739">
    <property type="term" value="C:mitochondrion"/>
    <property type="evidence" value="ECO:0007005"/>
    <property type="project" value="FlyBase"/>
</dbReference>
<dbReference type="GO" id="GO:0045259">
    <property type="term" value="C:proton-transporting ATP synthase complex"/>
    <property type="evidence" value="ECO:0000250"/>
    <property type="project" value="FlyBase"/>
</dbReference>
<dbReference type="GO" id="GO:0015078">
    <property type="term" value="F:proton transmembrane transporter activity"/>
    <property type="evidence" value="ECO:0007669"/>
    <property type="project" value="InterPro"/>
</dbReference>
<dbReference type="GO" id="GO:0046034">
    <property type="term" value="P:ATP metabolic process"/>
    <property type="evidence" value="ECO:0000315"/>
    <property type="project" value="FlyBase"/>
</dbReference>
<dbReference type="GO" id="GO:0008340">
    <property type="term" value="P:determination of adult lifespan"/>
    <property type="evidence" value="ECO:0000315"/>
    <property type="project" value="FlyBase"/>
</dbReference>
<dbReference type="GO" id="GO:0070373">
    <property type="term" value="P:negative regulation of ERK1 and ERK2 cascade"/>
    <property type="evidence" value="ECO:0000315"/>
    <property type="project" value="FlyBase"/>
</dbReference>
<dbReference type="GO" id="GO:0032007">
    <property type="term" value="P:negative regulation of TOR signaling"/>
    <property type="evidence" value="ECO:0000315"/>
    <property type="project" value="FlyBase"/>
</dbReference>
<dbReference type="GO" id="GO:0015986">
    <property type="term" value="P:proton motive force-driven ATP synthesis"/>
    <property type="evidence" value="ECO:0000250"/>
    <property type="project" value="FlyBase"/>
</dbReference>
<dbReference type="GO" id="GO:1902600">
    <property type="term" value="P:proton transmembrane transport"/>
    <property type="evidence" value="ECO:0000250"/>
    <property type="project" value="FlyBase"/>
</dbReference>
<dbReference type="GO" id="GO:0051881">
    <property type="term" value="P:regulation of mitochondrial membrane potential"/>
    <property type="evidence" value="ECO:0000315"/>
    <property type="project" value="FlyBase"/>
</dbReference>
<dbReference type="GO" id="GO:0006979">
    <property type="term" value="P:response to oxidative stress"/>
    <property type="evidence" value="ECO:0000315"/>
    <property type="project" value="FlyBase"/>
</dbReference>
<dbReference type="Gene3D" id="6.10.280.70">
    <property type="match status" value="1"/>
</dbReference>
<dbReference type="InterPro" id="IPR008689">
    <property type="entry name" value="ATP_synth_F0_dsu_mt"/>
</dbReference>
<dbReference type="InterPro" id="IPR036228">
    <property type="entry name" value="ATP_synth_F0_dsu_sf_mt"/>
</dbReference>
<dbReference type="PANTHER" id="PTHR12700">
    <property type="entry name" value="ATP SYNTHASE SUBUNIT D, MITOCHONDRIAL"/>
    <property type="match status" value="1"/>
</dbReference>
<dbReference type="Pfam" id="PF05873">
    <property type="entry name" value="Mt_ATP-synt_D"/>
    <property type="match status" value="1"/>
</dbReference>
<dbReference type="PIRSF" id="PIRSF005514">
    <property type="entry name" value="ATPase_F0_D_mt"/>
    <property type="match status" value="1"/>
</dbReference>
<dbReference type="SUPFAM" id="SSF161065">
    <property type="entry name" value="ATP synthase D chain-like"/>
    <property type="match status" value="1"/>
</dbReference>
<proteinExistence type="evidence at transcript level"/>
<protein>
    <recommendedName>
        <fullName>ATP synthase subunit d, mitochondrial</fullName>
        <shortName>ATPase subunit d</shortName>
    </recommendedName>
</protein>
<reference key="1">
    <citation type="journal article" date="1999" name="Mol. Gen. Genet.">
        <title>Identification of nuclear genes encoding mitochondrial proteins: isolation of a collection of D. melanogaster cDNAs homologous to sequences in the Human Gene Index database.</title>
        <authorList>
            <person name="Caggese C."/>
            <person name="Ragone G."/>
            <person name="Perrini B."/>
            <person name="Moschetti R."/>
            <person name="de Pinto V."/>
            <person name="Caizzi R."/>
            <person name="Barsanti P."/>
        </authorList>
    </citation>
    <scope>NUCLEOTIDE SEQUENCE [MRNA]</scope>
    <source>
        <tissue>Ovary</tissue>
    </source>
</reference>
<reference key="2">
    <citation type="journal article" date="2000" name="Science">
        <title>The genome sequence of Drosophila melanogaster.</title>
        <authorList>
            <person name="Adams M.D."/>
            <person name="Celniker S.E."/>
            <person name="Holt R.A."/>
            <person name="Evans C.A."/>
            <person name="Gocayne J.D."/>
            <person name="Amanatides P.G."/>
            <person name="Scherer S.E."/>
            <person name="Li P.W."/>
            <person name="Hoskins R.A."/>
            <person name="Galle R.F."/>
            <person name="George R.A."/>
            <person name="Lewis S.E."/>
            <person name="Richards S."/>
            <person name="Ashburner M."/>
            <person name="Henderson S.N."/>
            <person name="Sutton G.G."/>
            <person name="Wortman J.R."/>
            <person name="Yandell M.D."/>
            <person name="Zhang Q."/>
            <person name="Chen L.X."/>
            <person name="Brandon R.C."/>
            <person name="Rogers Y.-H.C."/>
            <person name="Blazej R.G."/>
            <person name="Champe M."/>
            <person name="Pfeiffer B.D."/>
            <person name="Wan K.H."/>
            <person name="Doyle C."/>
            <person name="Baxter E.G."/>
            <person name="Helt G."/>
            <person name="Nelson C.R."/>
            <person name="Miklos G.L.G."/>
            <person name="Abril J.F."/>
            <person name="Agbayani A."/>
            <person name="An H.-J."/>
            <person name="Andrews-Pfannkoch C."/>
            <person name="Baldwin D."/>
            <person name="Ballew R.M."/>
            <person name="Basu A."/>
            <person name="Baxendale J."/>
            <person name="Bayraktaroglu L."/>
            <person name="Beasley E.M."/>
            <person name="Beeson K.Y."/>
            <person name="Benos P.V."/>
            <person name="Berman B.P."/>
            <person name="Bhandari D."/>
            <person name="Bolshakov S."/>
            <person name="Borkova D."/>
            <person name="Botchan M.R."/>
            <person name="Bouck J."/>
            <person name="Brokstein P."/>
            <person name="Brottier P."/>
            <person name="Burtis K.C."/>
            <person name="Busam D.A."/>
            <person name="Butler H."/>
            <person name="Cadieu E."/>
            <person name="Center A."/>
            <person name="Chandra I."/>
            <person name="Cherry J.M."/>
            <person name="Cawley S."/>
            <person name="Dahlke C."/>
            <person name="Davenport L.B."/>
            <person name="Davies P."/>
            <person name="de Pablos B."/>
            <person name="Delcher A."/>
            <person name="Deng Z."/>
            <person name="Mays A.D."/>
            <person name="Dew I."/>
            <person name="Dietz S.M."/>
            <person name="Dodson K."/>
            <person name="Doup L.E."/>
            <person name="Downes M."/>
            <person name="Dugan-Rocha S."/>
            <person name="Dunkov B.C."/>
            <person name="Dunn P."/>
            <person name="Durbin K.J."/>
            <person name="Evangelista C.C."/>
            <person name="Ferraz C."/>
            <person name="Ferriera S."/>
            <person name="Fleischmann W."/>
            <person name="Fosler C."/>
            <person name="Gabrielian A.E."/>
            <person name="Garg N.S."/>
            <person name="Gelbart W.M."/>
            <person name="Glasser K."/>
            <person name="Glodek A."/>
            <person name="Gong F."/>
            <person name="Gorrell J.H."/>
            <person name="Gu Z."/>
            <person name="Guan P."/>
            <person name="Harris M."/>
            <person name="Harris N.L."/>
            <person name="Harvey D.A."/>
            <person name="Heiman T.J."/>
            <person name="Hernandez J.R."/>
            <person name="Houck J."/>
            <person name="Hostin D."/>
            <person name="Houston K.A."/>
            <person name="Howland T.J."/>
            <person name="Wei M.-H."/>
            <person name="Ibegwam C."/>
            <person name="Jalali M."/>
            <person name="Kalush F."/>
            <person name="Karpen G.H."/>
            <person name="Ke Z."/>
            <person name="Kennison J.A."/>
            <person name="Ketchum K.A."/>
            <person name="Kimmel B.E."/>
            <person name="Kodira C.D."/>
            <person name="Kraft C.L."/>
            <person name="Kravitz S."/>
            <person name="Kulp D."/>
            <person name="Lai Z."/>
            <person name="Lasko P."/>
            <person name="Lei Y."/>
            <person name="Levitsky A.A."/>
            <person name="Li J.H."/>
            <person name="Li Z."/>
            <person name="Liang Y."/>
            <person name="Lin X."/>
            <person name="Liu X."/>
            <person name="Mattei B."/>
            <person name="McIntosh T.C."/>
            <person name="McLeod M.P."/>
            <person name="McPherson D."/>
            <person name="Merkulov G."/>
            <person name="Milshina N.V."/>
            <person name="Mobarry C."/>
            <person name="Morris J."/>
            <person name="Moshrefi A."/>
            <person name="Mount S.M."/>
            <person name="Moy M."/>
            <person name="Murphy B."/>
            <person name="Murphy L."/>
            <person name="Muzny D.M."/>
            <person name="Nelson D.L."/>
            <person name="Nelson D.R."/>
            <person name="Nelson K.A."/>
            <person name="Nixon K."/>
            <person name="Nusskern D.R."/>
            <person name="Pacleb J.M."/>
            <person name="Palazzolo M."/>
            <person name="Pittman G.S."/>
            <person name="Pan S."/>
            <person name="Pollard J."/>
            <person name="Puri V."/>
            <person name="Reese M.G."/>
            <person name="Reinert K."/>
            <person name="Remington K."/>
            <person name="Saunders R.D.C."/>
            <person name="Scheeler F."/>
            <person name="Shen H."/>
            <person name="Shue B.C."/>
            <person name="Siden-Kiamos I."/>
            <person name="Simpson M."/>
            <person name="Skupski M.P."/>
            <person name="Smith T.J."/>
            <person name="Spier E."/>
            <person name="Spradling A.C."/>
            <person name="Stapleton M."/>
            <person name="Strong R."/>
            <person name="Sun E."/>
            <person name="Svirskas R."/>
            <person name="Tector C."/>
            <person name="Turner R."/>
            <person name="Venter E."/>
            <person name="Wang A.H."/>
            <person name="Wang X."/>
            <person name="Wang Z.-Y."/>
            <person name="Wassarman D.A."/>
            <person name="Weinstock G.M."/>
            <person name="Weissenbach J."/>
            <person name="Williams S.M."/>
            <person name="Woodage T."/>
            <person name="Worley K.C."/>
            <person name="Wu D."/>
            <person name="Yang S."/>
            <person name="Yao Q.A."/>
            <person name="Ye J."/>
            <person name="Yeh R.-F."/>
            <person name="Zaveri J.S."/>
            <person name="Zhan M."/>
            <person name="Zhang G."/>
            <person name="Zhao Q."/>
            <person name="Zheng L."/>
            <person name="Zheng X.H."/>
            <person name="Zhong F.N."/>
            <person name="Zhong W."/>
            <person name="Zhou X."/>
            <person name="Zhu S.C."/>
            <person name="Zhu X."/>
            <person name="Smith H.O."/>
            <person name="Gibbs R.A."/>
            <person name="Myers E.W."/>
            <person name="Rubin G.M."/>
            <person name="Venter J.C."/>
        </authorList>
    </citation>
    <scope>NUCLEOTIDE SEQUENCE [LARGE SCALE GENOMIC DNA]</scope>
    <source>
        <strain>Berkeley</strain>
    </source>
</reference>
<reference key="3">
    <citation type="journal article" date="2002" name="Genome Biol.">
        <title>Annotation of the Drosophila melanogaster euchromatic genome: a systematic review.</title>
        <authorList>
            <person name="Misra S."/>
            <person name="Crosby M.A."/>
            <person name="Mungall C.J."/>
            <person name="Matthews B.B."/>
            <person name="Campbell K.S."/>
            <person name="Hradecky P."/>
            <person name="Huang Y."/>
            <person name="Kaminker J.S."/>
            <person name="Millburn G.H."/>
            <person name="Prochnik S.E."/>
            <person name="Smith C.D."/>
            <person name="Tupy J.L."/>
            <person name="Whitfield E.J."/>
            <person name="Bayraktaroglu L."/>
            <person name="Berman B.P."/>
            <person name="Bettencourt B.R."/>
            <person name="Celniker S.E."/>
            <person name="de Grey A.D.N.J."/>
            <person name="Drysdale R.A."/>
            <person name="Harris N.L."/>
            <person name="Richter J."/>
            <person name="Russo S."/>
            <person name="Schroeder A.J."/>
            <person name="Shu S.Q."/>
            <person name="Stapleton M."/>
            <person name="Yamada C."/>
            <person name="Ashburner M."/>
            <person name="Gelbart W.M."/>
            <person name="Rubin G.M."/>
            <person name="Lewis S.E."/>
        </authorList>
    </citation>
    <scope>GENOME REANNOTATION</scope>
    <source>
        <strain>Berkeley</strain>
    </source>
</reference>
<reference key="4">
    <citation type="journal article" date="2002" name="Genome Biol.">
        <title>A Drosophila full-length cDNA resource.</title>
        <authorList>
            <person name="Stapleton M."/>
            <person name="Carlson J.W."/>
            <person name="Brokstein P."/>
            <person name="Yu C."/>
            <person name="Champe M."/>
            <person name="George R.A."/>
            <person name="Guarin H."/>
            <person name="Kronmiller B."/>
            <person name="Pacleb J.M."/>
            <person name="Park S."/>
            <person name="Wan K.H."/>
            <person name="Rubin G.M."/>
            <person name="Celniker S.E."/>
        </authorList>
    </citation>
    <scope>NUCLEOTIDE SEQUENCE [LARGE SCALE MRNA]</scope>
    <source>
        <strain>Berkeley</strain>
        <tissue>Head</tissue>
    </source>
</reference>
<reference key="5">
    <citation type="submission" date="2009-06" db="EMBL/GenBank/DDBJ databases">
        <authorList>
            <person name="Carlson J.W."/>
            <person name="Booth B."/>
            <person name="Frise E."/>
            <person name="Park S."/>
            <person name="Wan K.H."/>
            <person name="Yu C."/>
            <person name="Celniker S.E."/>
        </authorList>
    </citation>
    <scope>NUCLEOTIDE SEQUENCE [LARGE SCALE MRNA]</scope>
    <source>
        <strain>Berkeley</strain>
    </source>
</reference>
<reference key="6">
    <citation type="journal article" date="2005" name="Mol. Biol. Evol.">
        <title>Intragenic Hill-Robertson interference influences selection intensity on synonymous mutations in Drosophila.</title>
        <authorList>
            <person name="Comeron J.M."/>
            <person name="Guthrie T.B."/>
        </authorList>
    </citation>
    <scope>NUCLEOTIDE SEQUENCE [GENOMIC DNA] OF 8-172</scope>
    <source>
        <strain>Ral1</strain>
    </source>
</reference>